<dbReference type="EMBL" id="AE006468">
    <property type="protein sequence ID" value="AAL23363.1"/>
    <property type="molecule type" value="Genomic_DNA"/>
</dbReference>
<dbReference type="RefSeq" id="NP_463404.1">
    <property type="nucleotide sequence ID" value="NC_003197.2"/>
</dbReference>
<dbReference type="RefSeq" id="WP_000511329.1">
    <property type="nucleotide sequence ID" value="NC_003197.2"/>
</dbReference>
<dbReference type="STRING" id="99287.STM4545"/>
<dbReference type="PaxDb" id="99287-STM4545"/>
<dbReference type="GeneID" id="1256071"/>
<dbReference type="KEGG" id="stm:STM4545"/>
<dbReference type="PATRIC" id="fig|99287.12.peg.4789"/>
<dbReference type="HOGENOM" id="CLU_117642_1_0_6"/>
<dbReference type="OMA" id="AMVEINH"/>
<dbReference type="PhylomeDB" id="Q8ZJX4"/>
<dbReference type="BioCyc" id="SENT99287:STM4545-MONOMER"/>
<dbReference type="Proteomes" id="UP000001014">
    <property type="component" value="Chromosome"/>
</dbReference>
<dbReference type="GO" id="GO:0005886">
    <property type="term" value="C:plasma membrane"/>
    <property type="evidence" value="ECO:0000318"/>
    <property type="project" value="GO_Central"/>
</dbReference>
<dbReference type="GO" id="GO:0015744">
    <property type="term" value="P:succinate transport"/>
    <property type="evidence" value="ECO:0000318"/>
    <property type="project" value="GO_Central"/>
</dbReference>
<dbReference type="HAMAP" id="MF_01191">
    <property type="entry name" value="YjjB"/>
    <property type="match status" value="1"/>
</dbReference>
<dbReference type="InterPro" id="IPR024528">
    <property type="entry name" value="ThrE_2"/>
</dbReference>
<dbReference type="InterPro" id="IPR050539">
    <property type="entry name" value="ThrE_Dicarb/AminoAcid_Exp"/>
</dbReference>
<dbReference type="InterPro" id="IPR020914">
    <property type="entry name" value="YjjB"/>
</dbReference>
<dbReference type="NCBIfam" id="NF007391">
    <property type="entry name" value="PRK09917.1"/>
    <property type="match status" value="1"/>
</dbReference>
<dbReference type="PANTHER" id="PTHR34390:SF1">
    <property type="entry name" value="SUCCINATE TRANSPORTER SUBUNIT YJJB-RELATED"/>
    <property type="match status" value="1"/>
</dbReference>
<dbReference type="PANTHER" id="PTHR34390">
    <property type="entry name" value="UPF0442 PROTEIN YJJB-RELATED"/>
    <property type="match status" value="1"/>
</dbReference>
<dbReference type="Pfam" id="PF12821">
    <property type="entry name" value="ThrE_2"/>
    <property type="match status" value="1"/>
</dbReference>
<evidence type="ECO:0000255" key="1">
    <source>
        <dbReference type="HAMAP-Rule" id="MF_01191"/>
    </source>
</evidence>
<organism>
    <name type="scientific">Salmonella typhimurium (strain LT2 / SGSC1412 / ATCC 700720)</name>
    <dbReference type="NCBI Taxonomy" id="99287"/>
    <lineage>
        <taxon>Bacteria</taxon>
        <taxon>Pseudomonadati</taxon>
        <taxon>Pseudomonadota</taxon>
        <taxon>Gammaproteobacteria</taxon>
        <taxon>Enterobacterales</taxon>
        <taxon>Enterobacteriaceae</taxon>
        <taxon>Salmonella</taxon>
    </lineage>
</organism>
<name>YJJB_SALTY</name>
<accession>Q8ZJX4</accession>
<comment type="function">
    <text evidence="1">Involved in succinate export with YjjP. Both proteins are required for export.</text>
</comment>
<comment type="subunit">
    <text evidence="1">The transporter is composed of YjjB and YjjP.</text>
</comment>
<comment type="subcellular location">
    <subcellularLocation>
        <location evidence="1">Cell inner membrane</location>
        <topology evidence="1">Multi-pass membrane protein</topology>
    </subcellularLocation>
</comment>
<comment type="similarity">
    <text evidence="1">Belongs to the ThrE exporter (TC 2.A.79) family.</text>
</comment>
<proteinExistence type="inferred from homology"/>
<keyword id="KW-0997">Cell inner membrane</keyword>
<keyword id="KW-1003">Cell membrane</keyword>
<keyword id="KW-0472">Membrane</keyword>
<keyword id="KW-1185">Reference proteome</keyword>
<keyword id="KW-0812">Transmembrane</keyword>
<keyword id="KW-1133">Transmembrane helix</keyword>
<keyword id="KW-0813">Transport</keyword>
<feature type="chain" id="PRO_0000293675" description="Probable succinate transporter subunit YjjB">
    <location>
        <begin position="1"/>
        <end position="157"/>
    </location>
</feature>
<feature type="transmembrane region" description="Helical" evidence="1">
    <location>
        <begin position="8"/>
        <end position="28"/>
    </location>
</feature>
<feature type="transmembrane region" description="Helical" evidence="1">
    <location>
        <begin position="55"/>
        <end position="75"/>
    </location>
</feature>
<feature type="transmembrane region" description="Helical" evidence="1">
    <location>
        <begin position="87"/>
        <end position="107"/>
    </location>
</feature>
<feature type="transmembrane region" description="Helical" evidence="1">
    <location>
        <begin position="129"/>
        <end position="149"/>
    </location>
</feature>
<reference key="1">
    <citation type="journal article" date="2001" name="Nature">
        <title>Complete genome sequence of Salmonella enterica serovar Typhimurium LT2.</title>
        <authorList>
            <person name="McClelland M."/>
            <person name="Sanderson K.E."/>
            <person name="Spieth J."/>
            <person name="Clifton S.W."/>
            <person name="Latreille P."/>
            <person name="Courtney L."/>
            <person name="Porwollik S."/>
            <person name="Ali J."/>
            <person name="Dante M."/>
            <person name="Du F."/>
            <person name="Hou S."/>
            <person name="Layman D."/>
            <person name="Leonard S."/>
            <person name="Nguyen C."/>
            <person name="Scott K."/>
            <person name="Holmes A."/>
            <person name="Grewal N."/>
            <person name="Mulvaney E."/>
            <person name="Ryan E."/>
            <person name="Sun H."/>
            <person name="Florea L."/>
            <person name="Miller W."/>
            <person name="Stoneking T."/>
            <person name="Nhan M."/>
            <person name="Waterston R."/>
            <person name="Wilson R.K."/>
        </authorList>
    </citation>
    <scope>NUCLEOTIDE SEQUENCE [LARGE SCALE GENOMIC DNA]</scope>
    <source>
        <strain>LT2 / SGSC1412 / ATCC 700720</strain>
    </source>
</reference>
<sequence length="157" mass="17116">MGIIDFLLALMQDMILSAIPAVGFAMVFNVPHRALPWCALLGALGHGSRMLMMSAGFNIEWSTFMASLLVGSIGIQWSRWYLAHPKVFTVAAVIPMFPGISAYTAMISAVKISHLGYSEPMMITLLTNFLKASSIVGALSIGLSVPGLWLYRKRPRV</sequence>
<gene>
    <name evidence="1" type="primary">yjjB</name>
    <name type="ordered locus">STM4545</name>
</gene>
<protein>
    <recommendedName>
        <fullName evidence="1">Probable succinate transporter subunit YjjB</fullName>
    </recommendedName>
</protein>